<sequence length="388" mass="41351">MKHLHRFFSSDASGGIILIIAAALAMLMANMGATSGWYHDFLETPVQLRVGALEINKNMLLWINDALMAVFFLLIGLEVKRELMQGSLASLRQAAFPVIAAIGGMIVPALLYLAFNYSDPVTREGWAIPAATDIAFALGVLALLGSRVPLALKIFLMALAIIDDLGAIVIIALFYTSDLSIVSLGVAAFAIAVLALLNLCGVRRTGVYILVGAVLWTAVLKSGVHATLAGVIVGFFIPLKEKHGRSPAKRLEHVLHPWVAYLILPLFAFANAGVSLQGVTIDGLTSMLPLGIIAGLLIGKPLGISLFCWLALRFKLAHLPQGTTYQQIMAVGILCGIGFTMSIFIASLAFGNVDPELINWAKLGILIGSLLSAVVGYSWLRARLNAPA</sequence>
<comment type="function">
    <text evidence="1">Na(+)/H(+) antiporter that extrudes sodium in exchange for external protons.</text>
</comment>
<comment type="catalytic activity">
    <reaction evidence="1">
        <text>Na(+)(in) + 2 H(+)(out) = Na(+)(out) + 2 H(+)(in)</text>
        <dbReference type="Rhea" id="RHEA:29251"/>
        <dbReference type="ChEBI" id="CHEBI:15378"/>
        <dbReference type="ChEBI" id="CHEBI:29101"/>
    </reaction>
    <physiologicalReaction direction="left-to-right" evidence="1">
        <dbReference type="Rhea" id="RHEA:29252"/>
    </physiologicalReaction>
</comment>
<comment type="subcellular location">
    <subcellularLocation>
        <location evidence="1">Cell inner membrane</location>
        <topology evidence="1">Multi-pass membrane protein</topology>
    </subcellularLocation>
</comment>
<comment type="similarity">
    <text evidence="1">Belongs to the NhaA Na(+)/H(+) (TC 2.A.33) antiporter family.</text>
</comment>
<gene>
    <name evidence="1" type="primary">nhaA</name>
    <name type="ordered locus">STM0039</name>
</gene>
<evidence type="ECO:0000255" key="1">
    <source>
        <dbReference type="HAMAP-Rule" id="MF_01844"/>
    </source>
</evidence>
<evidence type="ECO:0007829" key="2">
    <source>
        <dbReference type="PDB" id="7A0W"/>
    </source>
</evidence>
<evidence type="ECO:0007829" key="3">
    <source>
        <dbReference type="PDB" id="7A0Y"/>
    </source>
</evidence>
<feature type="chain" id="PRO_0000334417" description="Na(+)/H(+) antiporter NhaA">
    <location>
        <begin position="1"/>
        <end position="388"/>
    </location>
</feature>
<feature type="transmembrane region" description="Helical" evidence="1">
    <location>
        <begin position="14"/>
        <end position="34"/>
    </location>
</feature>
<feature type="transmembrane region" description="Helical" evidence="1">
    <location>
        <begin position="59"/>
        <end position="79"/>
    </location>
</feature>
<feature type="transmembrane region" description="Helical" evidence="1">
    <location>
        <begin position="95"/>
        <end position="115"/>
    </location>
</feature>
<feature type="transmembrane region" description="Helical" evidence="1">
    <location>
        <begin position="125"/>
        <end position="145"/>
    </location>
</feature>
<feature type="transmembrane region" description="Helical" evidence="1">
    <location>
        <begin position="154"/>
        <end position="174"/>
    </location>
</feature>
<feature type="transmembrane region" description="Helical" evidence="1">
    <location>
        <begin position="179"/>
        <end position="199"/>
    </location>
</feature>
<feature type="transmembrane region" description="Helical" evidence="1">
    <location>
        <begin position="219"/>
        <end position="239"/>
    </location>
</feature>
<feature type="transmembrane region" description="Helical" evidence="1">
    <location>
        <begin position="254"/>
        <end position="274"/>
    </location>
</feature>
<feature type="transmembrane region" description="Helical" evidence="1">
    <location>
        <begin position="292"/>
        <end position="312"/>
    </location>
</feature>
<feature type="transmembrane region" description="Helical" evidence="1">
    <location>
        <begin position="328"/>
        <end position="348"/>
    </location>
</feature>
<feature type="transmembrane region" description="Helical" evidence="1">
    <location>
        <begin position="360"/>
        <end position="380"/>
    </location>
</feature>
<feature type="helix" evidence="2">
    <location>
        <begin position="13"/>
        <end position="29"/>
    </location>
</feature>
<feature type="turn" evidence="2">
    <location>
        <begin position="32"/>
        <end position="36"/>
    </location>
</feature>
<feature type="helix" evidence="2">
    <location>
        <begin position="37"/>
        <end position="42"/>
    </location>
</feature>
<feature type="strand" evidence="2">
    <location>
        <begin position="45"/>
        <end position="50"/>
    </location>
</feature>
<feature type="strand" evidence="2">
    <location>
        <begin position="53"/>
        <end position="58"/>
    </location>
</feature>
<feature type="helix" evidence="2">
    <location>
        <begin position="59"/>
        <end position="85"/>
    </location>
</feature>
<feature type="helix" evidence="2">
    <location>
        <begin position="87"/>
        <end position="89"/>
    </location>
</feature>
<feature type="turn" evidence="2">
    <location>
        <begin position="91"/>
        <end position="94"/>
    </location>
</feature>
<feature type="helix" evidence="2">
    <location>
        <begin position="95"/>
        <end position="116"/>
    </location>
</feature>
<feature type="turn" evidence="2">
    <location>
        <begin position="120"/>
        <end position="122"/>
    </location>
</feature>
<feature type="helix" evidence="2">
    <location>
        <begin position="123"/>
        <end position="125"/>
    </location>
</feature>
<feature type="helix" evidence="2">
    <location>
        <begin position="128"/>
        <end position="130"/>
    </location>
</feature>
<feature type="helix" evidence="2">
    <location>
        <begin position="134"/>
        <end position="143"/>
    </location>
</feature>
<feature type="turn" evidence="2">
    <location>
        <begin position="144"/>
        <end position="146"/>
    </location>
</feature>
<feature type="helix" evidence="2">
    <location>
        <begin position="150"/>
        <end position="173"/>
    </location>
</feature>
<feature type="strand" evidence="3">
    <location>
        <begin position="174"/>
        <end position="176"/>
    </location>
</feature>
<feature type="helix" evidence="2">
    <location>
        <begin position="181"/>
        <end position="199"/>
    </location>
</feature>
<feature type="helix" evidence="2">
    <location>
        <begin position="205"/>
        <end position="218"/>
    </location>
</feature>
<feature type="turn" evidence="2">
    <location>
        <begin position="219"/>
        <end position="221"/>
    </location>
</feature>
<feature type="helix" evidence="2">
    <location>
        <begin position="223"/>
        <end position="236"/>
    </location>
</feature>
<feature type="helix" evidence="2">
    <location>
        <begin position="247"/>
        <end position="261"/>
    </location>
</feature>
<feature type="helix" evidence="2">
    <location>
        <begin position="263"/>
        <end position="271"/>
    </location>
</feature>
<feature type="helix" evidence="2">
    <location>
        <begin position="281"/>
        <end position="284"/>
    </location>
</feature>
<feature type="helix" evidence="2">
    <location>
        <begin position="287"/>
        <end position="297"/>
    </location>
</feature>
<feature type="helix" evidence="2">
    <location>
        <begin position="299"/>
        <end position="313"/>
    </location>
</feature>
<feature type="helix" evidence="2">
    <location>
        <begin position="326"/>
        <end position="334"/>
    </location>
</feature>
<feature type="helix" evidence="2">
    <location>
        <begin position="339"/>
        <end position="349"/>
    </location>
</feature>
<feature type="turn" evidence="2">
    <location>
        <begin position="350"/>
        <end position="352"/>
    </location>
</feature>
<feature type="helix" evidence="2">
    <location>
        <begin position="355"/>
        <end position="378"/>
    </location>
</feature>
<keyword id="KW-0002">3D-structure</keyword>
<keyword id="KW-0050">Antiport</keyword>
<keyword id="KW-0997">Cell inner membrane</keyword>
<keyword id="KW-1003">Cell membrane</keyword>
<keyword id="KW-0406">Ion transport</keyword>
<keyword id="KW-0472">Membrane</keyword>
<keyword id="KW-1185">Reference proteome</keyword>
<keyword id="KW-0915">Sodium</keyword>
<keyword id="KW-0739">Sodium transport</keyword>
<keyword id="KW-0812">Transmembrane</keyword>
<keyword id="KW-1133">Transmembrane helix</keyword>
<keyword id="KW-0813">Transport</keyword>
<accession>Q8ZRZ3</accession>
<proteinExistence type="evidence at protein level"/>
<dbReference type="EMBL" id="AE006468">
    <property type="protein sequence ID" value="AAL19003.1"/>
    <property type="molecule type" value="Genomic_DNA"/>
</dbReference>
<dbReference type="RefSeq" id="NP_459044.1">
    <property type="nucleotide sequence ID" value="NC_003197.2"/>
</dbReference>
<dbReference type="RefSeq" id="WP_000681340.1">
    <property type="nucleotide sequence ID" value="NC_003197.2"/>
</dbReference>
<dbReference type="PDB" id="7A0W">
    <property type="method" value="X-ray"/>
    <property type="resolution" value="2.04 A"/>
    <property type="chains" value="A/B=1-388"/>
</dbReference>
<dbReference type="PDB" id="7A0X">
    <property type="method" value="X-ray"/>
    <property type="resolution" value="2.37 A"/>
    <property type="chains" value="A/B=1-388"/>
</dbReference>
<dbReference type="PDB" id="7A0Y">
    <property type="method" value="X-ray"/>
    <property type="resolution" value="2.45 A"/>
    <property type="chains" value="A/B=2-388"/>
</dbReference>
<dbReference type="PDBsum" id="7A0W"/>
<dbReference type="PDBsum" id="7A0X"/>
<dbReference type="PDBsum" id="7A0Y"/>
<dbReference type="SMR" id="Q8ZRZ3"/>
<dbReference type="STRING" id="99287.STM0039"/>
<dbReference type="PaxDb" id="99287-STM0039"/>
<dbReference type="GeneID" id="1251557"/>
<dbReference type="KEGG" id="stm:STM0039"/>
<dbReference type="PATRIC" id="fig|99287.12.peg.41"/>
<dbReference type="HOGENOM" id="CLU_015803_1_0_6"/>
<dbReference type="OMA" id="HGFGIPM"/>
<dbReference type="PhylomeDB" id="Q8ZRZ3"/>
<dbReference type="BioCyc" id="SENT99287:STM0039-MONOMER"/>
<dbReference type="Proteomes" id="UP000001014">
    <property type="component" value="Chromosome"/>
</dbReference>
<dbReference type="GO" id="GO:0005886">
    <property type="term" value="C:plasma membrane"/>
    <property type="evidence" value="ECO:0000318"/>
    <property type="project" value="GO_Central"/>
</dbReference>
<dbReference type="GO" id="GO:0015385">
    <property type="term" value="F:sodium:proton antiporter activity"/>
    <property type="evidence" value="ECO:0000318"/>
    <property type="project" value="GO_Central"/>
</dbReference>
<dbReference type="GO" id="GO:0006885">
    <property type="term" value="P:regulation of pH"/>
    <property type="evidence" value="ECO:0007669"/>
    <property type="project" value="InterPro"/>
</dbReference>
<dbReference type="FunFam" id="1.20.1530.10:FF:000001">
    <property type="entry name" value="Na(+)/H(+) antiporter NhaA"/>
    <property type="match status" value="1"/>
</dbReference>
<dbReference type="Gene3D" id="1.20.1530.10">
    <property type="entry name" value="Na+/H+ antiporter like domain"/>
    <property type="match status" value="1"/>
</dbReference>
<dbReference type="HAMAP" id="MF_01844">
    <property type="entry name" value="NhaA"/>
    <property type="match status" value="1"/>
</dbReference>
<dbReference type="InterPro" id="IPR023171">
    <property type="entry name" value="Na/H_antiporter_dom_sf"/>
</dbReference>
<dbReference type="InterPro" id="IPR004670">
    <property type="entry name" value="NhaA"/>
</dbReference>
<dbReference type="NCBIfam" id="TIGR00773">
    <property type="entry name" value="NhaA"/>
    <property type="match status" value="1"/>
</dbReference>
<dbReference type="NCBIfam" id="NF007111">
    <property type="entry name" value="PRK09560.1"/>
    <property type="match status" value="1"/>
</dbReference>
<dbReference type="NCBIfam" id="NF007112">
    <property type="entry name" value="PRK09561.1"/>
    <property type="match status" value="1"/>
</dbReference>
<dbReference type="PANTHER" id="PTHR30341:SF0">
    <property type="entry name" value="NA(+)_H(+) ANTIPORTER NHAA"/>
    <property type="match status" value="1"/>
</dbReference>
<dbReference type="PANTHER" id="PTHR30341">
    <property type="entry name" value="SODIUM ION/PROTON ANTIPORTER NHAA-RELATED"/>
    <property type="match status" value="1"/>
</dbReference>
<dbReference type="Pfam" id="PF06965">
    <property type="entry name" value="Na_H_antiport_1"/>
    <property type="match status" value="1"/>
</dbReference>
<protein>
    <recommendedName>
        <fullName evidence="1">Na(+)/H(+) antiporter NhaA</fullName>
    </recommendedName>
    <alternativeName>
        <fullName evidence="1">Sodium/proton antiporter NhaA</fullName>
    </alternativeName>
</protein>
<organism>
    <name type="scientific">Salmonella typhimurium (strain LT2 / SGSC1412 / ATCC 700720)</name>
    <dbReference type="NCBI Taxonomy" id="99287"/>
    <lineage>
        <taxon>Bacteria</taxon>
        <taxon>Pseudomonadati</taxon>
        <taxon>Pseudomonadota</taxon>
        <taxon>Gammaproteobacteria</taxon>
        <taxon>Enterobacterales</taxon>
        <taxon>Enterobacteriaceae</taxon>
        <taxon>Salmonella</taxon>
    </lineage>
</organism>
<name>NHAA_SALTY</name>
<reference key="1">
    <citation type="journal article" date="2001" name="Nature">
        <title>Complete genome sequence of Salmonella enterica serovar Typhimurium LT2.</title>
        <authorList>
            <person name="McClelland M."/>
            <person name="Sanderson K.E."/>
            <person name="Spieth J."/>
            <person name="Clifton S.W."/>
            <person name="Latreille P."/>
            <person name="Courtney L."/>
            <person name="Porwollik S."/>
            <person name="Ali J."/>
            <person name="Dante M."/>
            <person name="Du F."/>
            <person name="Hou S."/>
            <person name="Layman D."/>
            <person name="Leonard S."/>
            <person name="Nguyen C."/>
            <person name="Scott K."/>
            <person name="Holmes A."/>
            <person name="Grewal N."/>
            <person name="Mulvaney E."/>
            <person name="Ryan E."/>
            <person name="Sun H."/>
            <person name="Florea L."/>
            <person name="Miller W."/>
            <person name="Stoneking T."/>
            <person name="Nhan M."/>
            <person name="Waterston R."/>
            <person name="Wilson R.K."/>
        </authorList>
    </citation>
    <scope>NUCLEOTIDE SEQUENCE [LARGE SCALE GENOMIC DNA]</scope>
    <source>
        <strain>LT2 / SGSC1412 / ATCC 700720</strain>
    </source>
</reference>